<organism>
    <name type="scientific">Mus musculus</name>
    <name type="common">Mouse</name>
    <dbReference type="NCBI Taxonomy" id="10090"/>
    <lineage>
        <taxon>Eukaryota</taxon>
        <taxon>Metazoa</taxon>
        <taxon>Chordata</taxon>
        <taxon>Craniata</taxon>
        <taxon>Vertebrata</taxon>
        <taxon>Euteleostomi</taxon>
        <taxon>Mammalia</taxon>
        <taxon>Eutheria</taxon>
        <taxon>Euarchontoglires</taxon>
        <taxon>Glires</taxon>
        <taxon>Rodentia</taxon>
        <taxon>Myomorpha</taxon>
        <taxon>Muroidea</taxon>
        <taxon>Muridae</taxon>
        <taxon>Murinae</taxon>
        <taxon>Mus</taxon>
        <taxon>Mus</taxon>
    </lineage>
</organism>
<comment type="function">
    <text evidence="7">DOK proteins are enzymatically inert adaptor or scaffolding proteins. They provide a docking platform for the assembly of multimolecular signaling complexes. DOK3 is a negative regulator of JNK signaling in B-cells through interaction with INPP5D/SHIP1. May modulate ABL1 function.</text>
</comment>
<comment type="subunit">
    <text evidence="5 6 7">On tyrosine phosphorylation, interacts with CSK and INPP5D/SHIP1 via their SH2 domains. Both Tyr-325 and Tyr-343 are required for interaction with INPP5D. Only Tyr-325 is required for interaction with CSK. Binds ABL1 through the PTB domain and in a kinase-dependent manner. Does not interact with RasGAP.</text>
</comment>
<comment type="interaction">
    <interactant intactId="EBI-2906753">
        <id>Q9QZK7</id>
    </interactant>
    <interactant intactId="EBI-935477">
        <id>P03332</id>
        <label>gag</label>
    </interactant>
    <organismsDiffer>true</organismsDiffer>
    <experiments>3</experiments>
</comment>
<comment type="subcellular location">
    <subcellularLocation>
        <location evidence="1">Cytoplasm</location>
    </subcellularLocation>
    <subcellularLocation>
        <location evidence="1">Cell membrane</location>
        <topology evidence="1">Peripheral membrane protein</topology>
        <orientation evidence="1">Cytoplasmic side</orientation>
    </subcellularLocation>
</comment>
<comment type="alternative products">
    <event type="alternative splicing"/>
    <isoform>
        <id>Q9QZK7-1</id>
        <name>1</name>
        <sequence type="displayed"/>
    </isoform>
    <text>A number of isoforms are produced.</text>
</comment>
<comment type="tissue specificity">
    <text evidence="5 6">Predominantly expressed in bone marrow, spleen and lung. Low levels in heart, brain, liver, muscle, thymus, kidney and testis. Highly expressed in B-cells and macrophages.</text>
</comment>
<comment type="domain">
    <text evidence="1">PTB domain mediates receptor interaction.</text>
</comment>
<comment type="PTM">
    <text>Constitutively tyrosine-phosphorylated.</text>
</comment>
<comment type="PTM">
    <text>On IL2 stimulation, phosphorylated on C-terminal tyrosine residues possibly by Src kinases. Can also be phosphorylated by ABL1 kinase.</text>
</comment>
<comment type="miscellaneous">
    <text>Overexpression of DOK3 inhibits the transforming activity of v-ABL, the ABL oncogene.</text>
</comment>
<comment type="miscellaneous">
    <molecule>Isoform 1</molecule>
    <text>Major, and shortest isoform.</text>
</comment>
<comment type="similarity">
    <text evidence="8">Belongs to the DOK family. Type A subfamily.</text>
</comment>
<keyword id="KW-0025">Alternative splicing</keyword>
<keyword id="KW-1003">Cell membrane</keyword>
<keyword id="KW-0963">Cytoplasm</keyword>
<keyword id="KW-0472">Membrane</keyword>
<keyword id="KW-0597">Phosphoprotein</keyword>
<keyword id="KW-1185">Reference proteome</keyword>
<feature type="chain" id="PRO_0000187273" description="Docking protein 3">
    <location>
        <begin position="1"/>
        <end position="444"/>
    </location>
</feature>
<feature type="domain" description="PH">
    <location>
        <begin position="7"/>
        <end position="123"/>
    </location>
</feature>
<feature type="domain" description="IRS-type PTB" evidence="3">
    <location>
        <begin position="157"/>
        <end position="261"/>
    </location>
</feature>
<feature type="region of interest" description="Disordered" evidence="4">
    <location>
        <begin position="278"/>
        <end position="299"/>
    </location>
</feature>
<feature type="region of interest" description="Disordered" evidence="4">
    <location>
        <begin position="354"/>
        <end position="390"/>
    </location>
</feature>
<feature type="compositionally biased region" description="Low complexity" evidence="4">
    <location>
        <begin position="358"/>
        <end position="376"/>
    </location>
</feature>
<feature type="modified residue" description="Phosphoserine" evidence="2">
    <location>
        <position position="138"/>
    </location>
</feature>
<feature type="modified residue" description="Phosphoserine" evidence="10 11">
    <location>
        <position position="274"/>
    </location>
</feature>
<feature type="modified residue" description="Phosphoserine" evidence="11">
    <location>
        <position position="308"/>
    </location>
</feature>
<feature type="modified residue" description="Phosphoserine" evidence="9">
    <location>
        <position position="314"/>
    </location>
</feature>
<feature type="modified residue" description="Phosphotyrosine" evidence="9">
    <location>
        <position position="325"/>
    </location>
</feature>
<feature type="modified residue" description="Phosphoserine" evidence="11">
    <location>
        <position position="371"/>
    </location>
</feature>
<feature type="mutagenesis site" description="Greatly reduced ABL1-binding; reduced tyrosine phosphorylation." evidence="5">
    <original>R</original>
    <variation>A</variation>
    <location>
        <position position="209"/>
    </location>
</feature>
<feature type="mutagenesis site" description="Greatly reduced ABL1-binding; reduced tyrosine phosphorylation." evidence="5">
    <original>R</original>
    <variation>A</variation>
    <location>
        <position position="224"/>
    </location>
</feature>
<feature type="mutagenesis site" description="Enhanced reduction of BCR-induced IL2 secretion. No effect on interaction with INPP5D SH2 domain. Abolishes interaction with CSK SH2 domain. No effect on BCR-triggered tyrosine phosphorylation. Abolishes reduction of BCR-induced IL2 secretion, the interaction with INPP5D SH2 domain and BCR-triggered tyrosine phosphorylation; when associated with F-343." evidence="7">
    <original>Y</original>
    <variation>F</variation>
    <location>
        <position position="325"/>
    </location>
</feature>
<feature type="mutagenesis site" description="Some reduction of BCR-induced IL2 secretion. Some interaction with INPP5D SH2 domain. Some decrease in BCR-triggered tyrosine phosphorylation. Abolishes reduction of BCR-induced IL2 secretion, the interaction with INPP5D SH2 domain and BCR-triggered tyrosine phosphorylation; when associated with F-325." evidence="7">
    <original>Y</original>
    <variation>F</variation>
    <location>
        <position position="343"/>
    </location>
</feature>
<feature type="mutagenesis site" description="No effect on the reduction of BCR-induced IL2 secretion, nor on the interaction with the SH2 domain of INPP5D or CSK nor on BCR-triggered tyrosine phosphorylation; when associated with F-399." evidence="7">
    <original>Y</original>
    <variation>F</variation>
    <location>
        <position position="378"/>
    </location>
</feature>
<feature type="mutagenesis site" description="No effect on the reduction of BCR-induced IL2 secretion, nor on the interaction with the SH2 domain of INPP5D or CSK nor on BCR-triggered tyrosine phosphorylation; when associated with F-378." evidence="7">
    <original>Y</original>
    <variation>F</variation>
    <location>
        <position position="399"/>
    </location>
</feature>
<gene>
    <name type="primary">Dok3</name>
    <name type="synonym">Dokl</name>
</gene>
<proteinExistence type="evidence at protein level"/>
<accession>Q9QZK7</accession>
<protein>
    <recommendedName>
        <fullName>Docking protein 3</fullName>
    </recommendedName>
    <alternativeName>
        <fullName>Downstream of tyrosine kinase 3</fullName>
    </alternativeName>
    <alternativeName>
        <fullName>p62(dok)-like protein</fullName>
        <shortName>DOK-L</shortName>
    </alternativeName>
</protein>
<sequence length="444" mass="48027">MESVEPPVKDGILYQQHVKFGKKCWRKVWALLYAGGPSGVARLESWDVRDGGLGPAGDRSTGPSRRGERRVIRLADCVSVLPADGESCPRDTGAFLITTTERSHLLAAQHRQSWVDPICQLAFPGTGECSSGSGQAESPKRGFVPMEENSIYSSWQEVTEFPVIVQRTEATSRCQLKGPYLLVLGQDDIQLRETSKPQACFSWPYRFLRKYGSDKGVFSFEAGRRCDSGEGLFAFSSPRAPDICGVVAAAIARQRERLPELAMSPPCPLPRALSLPSLEPPGELREVAPGFELPTPRKLPLTDPGPQSLPLLLSPTQEGPASGLYASVCKQTSKHTGTAEHLYENVCMLEASPGLTNGGPEAQEGPPGGRSPLGSPIYHNTEDLSWPGSAQDSNLEAQYRRLLELELDEAGSAGRSGAQAGIKAKLVTLLTRERKKGPAPCDRP</sequence>
<reference key="1">
    <citation type="journal article" date="1999" name="Mol. Cell. Biol.">
        <title>Characterization of a novel member of the DOK family that binds and modulates Abl signaling.</title>
        <authorList>
            <person name="Cong F."/>
            <person name="Yuan B."/>
            <person name="Goff S.P."/>
        </authorList>
    </citation>
    <scope>NUCLEOTIDE SEQUENCE [MRNA]</scope>
    <scope>INTERACTION WITH ABL1</scope>
    <scope>SUBCELLULAR LOCATION</scope>
    <scope>TISSUE SPECIFICITY</scope>
    <scope>MUTAGENESIS OF ARG-209 AND ARG-224</scope>
    <source>
        <strain>BALB/cJ</strain>
    </source>
</reference>
<reference key="2">
    <citation type="journal article" date="2000" name="Mol. Cell. Biol.">
        <title>Dok-3, a novel adapter molecule involved in the negative regulation of immunoreceptor signaling.</title>
        <authorList>
            <person name="Lemay S."/>
            <person name="Davidson D."/>
            <person name="Latour S."/>
            <person name="Veillette A."/>
        </authorList>
    </citation>
    <scope>NUCLEOTIDE SEQUENCE [MRNA]</scope>
    <scope>TISSUE SPECIFICITY</scope>
    <scope>PHOSPHORYLATION</scope>
    <scope>INTERACTION WITH CSK AND INPP5D</scope>
</reference>
<reference key="3">
    <citation type="journal article" date="2004" name="Mol. Cell. Biol.">
        <title>Inhibition of the Jun N-terminal protein kinase pathway by SHIP-1, a lipid phosphatase that interacts with the adaptor molecule Dok-3.</title>
        <authorList>
            <person name="Robson J.D."/>
            <person name="Davidson D."/>
            <person name="Veillette A."/>
        </authorList>
    </citation>
    <scope>INTERACTION WITH INPP5D</scope>
    <scope>FUNCTION</scope>
    <scope>PHOSPHORYLATION</scope>
    <scope>MUTAGENESIS OF TYR-325; TYR-343; TYR-378 AND TYR-399</scope>
</reference>
<reference key="4">
    <citation type="journal article" date="2007" name="J. Immunol.">
        <title>Quantitative time-resolved phosphoproteomic analysis of mast cell signaling.</title>
        <authorList>
            <person name="Cao L."/>
            <person name="Yu K."/>
            <person name="Banh C."/>
            <person name="Nguyen V."/>
            <person name="Ritz A."/>
            <person name="Raphael B.J."/>
            <person name="Kawakami Y."/>
            <person name="Kawakami T."/>
            <person name="Salomon A.R."/>
        </authorList>
    </citation>
    <scope>PHOSPHORYLATION [LARGE SCALE ANALYSIS] AT SER-314 AND TYR-325</scope>
    <scope>IDENTIFICATION BY MASS SPECTROMETRY [LARGE SCALE ANALYSIS]</scope>
    <source>
        <tissue>Mast cell</tissue>
    </source>
</reference>
<reference key="5">
    <citation type="journal article" date="2009" name="Immunity">
        <title>The phagosomal proteome in interferon-gamma-activated macrophages.</title>
        <authorList>
            <person name="Trost M."/>
            <person name="English L."/>
            <person name="Lemieux S."/>
            <person name="Courcelles M."/>
            <person name="Desjardins M."/>
            <person name="Thibault P."/>
        </authorList>
    </citation>
    <scope>PHOSPHORYLATION [LARGE SCALE ANALYSIS] AT SER-274</scope>
    <scope>IDENTIFICATION BY MASS SPECTROMETRY [LARGE SCALE ANALYSIS]</scope>
</reference>
<reference key="6">
    <citation type="journal article" date="2010" name="Cell">
        <title>A tissue-specific atlas of mouse protein phosphorylation and expression.</title>
        <authorList>
            <person name="Huttlin E.L."/>
            <person name="Jedrychowski M.P."/>
            <person name="Elias J.E."/>
            <person name="Goswami T."/>
            <person name="Rad R."/>
            <person name="Beausoleil S.A."/>
            <person name="Villen J."/>
            <person name="Haas W."/>
            <person name="Sowa M.E."/>
            <person name="Gygi S.P."/>
        </authorList>
    </citation>
    <scope>PHOSPHORYLATION [LARGE SCALE ANALYSIS] AT SER-274; SER-308 AND SER-371</scope>
    <scope>IDENTIFICATION BY MASS SPECTROMETRY [LARGE SCALE ANALYSIS]</scope>
    <source>
        <tissue>Spleen</tissue>
    </source>
</reference>
<evidence type="ECO:0000250" key="1"/>
<evidence type="ECO:0000250" key="2">
    <source>
        <dbReference type="UniProtKB" id="Q7L591"/>
    </source>
</evidence>
<evidence type="ECO:0000255" key="3">
    <source>
        <dbReference type="PROSITE-ProRule" id="PRU00389"/>
    </source>
</evidence>
<evidence type="ECO:0000256" key="4">
    <source>
        <dbReference type="SAM" id="MobiDB-lite"/>
    </source>
</evidence>
<evidence type="ECO:0000269" key="5">
    <source>
    </source>
</evidence>
<evidence type="ECO:0000269" key="6">
    <source>
    </source>
</evidence>
<evidence type="ECO:0000269" key="7">
    <source>
    </source>
</evidence>
<evidence type="ECO:0000305" key="8"/>
<evidence type="ECO:0007744" key="9">
    <source>
    </source>
</evidence>
<evidence type="ECO:0007744" key="10">
    <source>
    </source>
</evidence>
<evidence type="ECO:0007744" key="11">
    <source>
    </source>
</evidence>
<dbReference type="EMBL" id="AF179242">
    <property type="protein sequence ID" value="AAF14285.1"/>
    <property type="molecule type" value="mRNA"/>
</dbReference>
<dbReference type="EMBL" id="AF237580">
    <property type="protein sequence ID" value="AAF61309.1"/>
    <property type="molecule type" value="mRNA"/>
</dbReference>
<dbReference type="CCDS" id="CCDS26548.1">
    <molecule id="Q9QZK7-1"/>
</dbReference>
<dbReference type="RefSeq" id="NP_038767.1">
    <molecule id="Q9QZK7-1"/>
    <property type="nucleotide sequence ID" value="NM_013739.2"/>
</dbReference>
<dbReference type="RefSeq" id="XP_017171013.1">
    <molecule id="Q9QZK7-1"/>
    <property type="nucleotide sequence ID" value="XM_017315524.1"/>
</dbReference>
<dbReference type="SMR" id="Q9QZK7"/>
<dbReference type="BioGRID" id="205149">
    <property type="interactions" value="8"/>
</dbReference>
<dbReference type="FunCoup" id="Q9QZK7">
    <property type="interactions" value="388"/>
</dbReference>
<dbReference type="IntAct" id="Q9QZK7">
    <property type="interactions" value="4"/>
</dbReference>
<dbReference type="MINT" id="Q9QZK7"/>
<dbReference type="STRING" id="10090.ENSMUSP00000153308"/>
<dbReference type="iPTMnet" id="Q9QZK7"/>
<dbReference type="PhosphoSitePlus" id="Q9QZK7"/>
<dbReference type="jPOST" id="Q9QZK7"/>
<dbReference type="PaxDb" id="10090-ENSMUSP00000046695"/>
<dbReference type="ProteomicsDB" id="277370">
    <molecule id="Q9QZK7-1"/>
</dbReference>
<dbReference type="Antibodypedia" id="29319">
    <property type="antibodies" value="384 antibodies from 36 providers"/>
</dbReference>
<dbReference type="DNASU" id="27261"/>
<dbReference type="Ensembl" id="ENSMUST00000047877.5">
    <molecule id="Q9QZK7-1"/>
    <property type="protein sequence ID" value="ENSMUSP00000046695.5"/>
    <property type="gene ID" value="ENSMUSG00000035711.6"/>
</dbReference>
<dbReference type="Ensembl" id="ENSMUST00000223563.2">
    <molecule id="Q9QZK7-1"/>
    <property type="protein sequence ID" value="ENSMUSP00000153308.2"/>
    <property type="gene ID" value="ENSMUSG00000035711.6"/>
</dbReference>
<dbReference type="GeneID" id="27261"/>
<dbReference type="KEGG" id="mmu:27261"/>
<dbReference type="UCSC" id="uc007qrm.1">
    <molecule id="Q9QZK7-1"/>
    <property type="organism name" value="mouse"/>
</dbReference>
<dbReference type="AGR" id="MGI:1351490"/>
<dbReference type="CTD" id="79930"/>
<dbReference type="MGI" id="MGI:1351490">
    <property type="gene designation" value="Dok3"/>
</dbReference>
<dbReference type="VEuPathDB" id="HostDB:ENSMUSG00000035711"/>
<dbReference type="eggNOG" id="KOG4047">
    <property type="taxonomic scope" value="Eukaryota"/>
</dbReference>
<dbReference type="GeneTree" id="ENSGT00940000161724"/>
<dbReference type="HOGENOM" id="CLU_569310_0_0_1"/>
<dbReference type="InParanoid" id="Q9QZK7"/>
<dbReference type="OMA" id="AQHRQEW"/>
<dbReference type="OrthoDB" id="6243387at2759"/>
<dbReference type="PhylomeDB" id="Q9QZK7"/>
<dbReference type="TreeFam" id="TF324994"/>
<dbReference type="Reactome" id="R-MMU-6798695">
    <property type="pathway name" value="Neutrophil degranulation"/>
</dbReference>
<dbReference type="BioGRID-ORCS" id="27261">
    <property type="hits" value="1 hit in 76 CRISPR screens"/>
</dbReference>
<dbReference type="PRO" id="PR:Q9QZK7"/>
<dbReference type="Proteomes" id="UP000000589">
    <property type="component" value="Chromosome 13"/>
</dbReference>
<dbReference type="RNAct" id="Q9QZK7">
    <property type="molecule type" value="protein"/>
</dbReference>
<dbReference type="Bgee" id="ENSMUSG00000035711">
    <property type="expression patterns" value="Expressed in granulocyte and 123 other cell types or tissues"/>
</dbReference>
<dbReference type="ExpressionAtlas" id="Q9QZK7">
    <property type="expression patterns" value="baseline and differential"/>
</dbReference>
<dbReference type="GO" id="GO:0005737">
    <property type="term" value="C:cytoplasm"/>
    <property type="evidence" value="ECO:0000314"/>
    <property type="project" value="MGI"/>
</dbReference>
<dbReference type="GO" id="GO:0005886">
    <property type="term" value="C:plasma membrane"/>
    <property type="evidence" value="ECO:0007669"/>
    <property type="project" value="UniProtKB-SubCell"/>
</dbReference>
<dbReference type="GO" id="GO:0007265">
    <property type="term" value="P:Ras protein signal transduction"/>
    <property type="evidence" value="ECO:0000314"/>
    <property type="project" value="MGI"/>
</dbReference>
<dbReference type="CDD" id="cd14676">
    <property type="entry name" value="PH_DOK1_2_3"/>
    <property type="match status" value="1"/>
</dbReference>
<dbReference type="CDD" id="cd01203">
    <property type="entry name" value="PTB_DOK1_DOK2_DOK3"/>
    <property type="match status" value="1"/>
</dbReference>
<dbReference type="FunFam" id="2.30.29.30:FF:000213">
    <property type="entry name" value="Docking protein 3"/>
    <property type="match status" value="1"/>
</dbReference>
<dbReference type="Gene3D" id="2.30.29.30">
    <property type="entry name" value="Pleckstrin-homology domain (PH domain)/Phosphotyrosine-binding domain (PTB)"/>
    <property type="match status" value="2"/>
</dbReference>
<dbReference type="InterPro" id="IPR050996">
    <property type="entry name" value="Docking_Protein_DOK"/>
</dbReference>
<dbReference type="InterPro" id="IPR037751">
    <property type="entry name" value="Dok1/2/3_PTB"/>
</dbReference>
<dbReference type="InterPro" id="IPR002404">
    <property type="entry name" value="IRS_PTB"/>
</dbReference>
<dbReference type="InterPro" id="IPR011993">
    <property type="entry name" value="PH-like_dom_sf"/>
</dbReference>
<dbReference type="InterPro" id="IPR001849">
    <property type="entry name" value="PH_domain"/>
</dbReference>
<dbReference type="PANTHER" id="PTHR21258:SF42">
    <property type="entry name" value="DOCKING PROTEIN 3"/>
    <property type="match status" value="1"/>
</dbReference>
<dbReference type="PANTHER" id="PTHR21258">
    <property type="entry name" value="DOCKING PROTEIN RELATED"/>
    <property type="match status" value="1"/>
</dbReference>
<dbReference type="Pfam" id="PF02174">
    <property type="entry name" value="IRS"/>
    <property type="match status" value="1"/>
</dbReference>
<dbReference type="SMART" id="SM01244">
    <property type="entry name" value="IRS"/>
    <property type="match status" value="1"/>
</dbReference>
<dbReference type="SMART" id="SM00233">
    <property type="entry name" value="PH"/>
    <property type="match status" value="1"/>
</dbReference>
<dbReference type="SMART" id="SM00310">
    <property type="entry name" value="PTBI"/>
    <property type="match status" value="1"/>
</dbReference>
<dbReference type="SUPFAM" id="SSF50729">
    <property type="entry name" value="PH domain-like"/>
    <property type="match status" value="2"/>
</dbReference>
<dbReference type="PROSITE" id="PS51064">
    <property type="entry name" value="IRS_PTB"/>
    <property type="match status" value="1"/>
</dbReference>
<name>DOK3_MOUSE</name>